<proteinExistence type="evidence at protein level"/>
<dbReference type="EMBL" id="AJ302081">
    <property type="protein sequence ID" value="CAC24849.1"/>
    <property type="molecule type" value="Genomic_DNA"/>
</dbReference>
<dbReference type="RefSeq" id="WP_005169306.1">
    <property type="nucleotide sequence ID" value="NZ_UHIX01000001.1"/>
</dbReference>
<dbReference type="SMR" id="P0DOA5"/>
<dbReference type="STRING" id="1443113.LC20_02539"/>
<dbReference type="eggNOG" id="COG2916">
    <property type="taxonomic scope" value="Bacteria"/>
</dbReference>
<dbReference type="OMA" id="NGVEKTW"/>
<dbReference type="GO" id="GO:0005829">
    <property type="term" value="C:cytosol"/>
    <property type="evidence" value="ECO:0007669"/>
    <property type="project" value="TreeGrafter"/>
</dbReference>
<dbReference type="GO" id="GO:0009295">
    <property type="term" value="C:nucleoid"/>
    <property type="evidence" value="ECO:0007669"/>
    <property type="project" value="UniProtKB-SubCell"/>
</dbReference>
<dbReference type="GO" id="GO:0032993">
    <property type="term" value="C:protein-DNA complex"/>
    <property type="evidence" value="ECO:0007669"/>
    <property type="project" value="TreeGrafter"/>
</dbReference>
<dbReference type="GO" id="GO:0003681">
    <property type="term" value="F:bent DNA binding"/>
    <property type="evidence" value="ECO:0007669"/>
    <property type="project" value="TreeGrafter"/>
</dbReference>
<dbReference type="GO" id="GO:0001217">
    <property type="term" value="F:DNA-binding transcription repressor activity"/>
    <property type="evidence" value="ECO:0007669"/>
    <property type="project" value="TreeGrafter"/>
</dbReference>
<dbReference type="GO" id="GO:0003680">
    <property type="term" value="F:minor groove of adenine-thymine-rich DNA binding"/>
    <property type="evidence" value="ECO:0007669"/>
    <property type="project" value="TreeGrafter"/>
</dbReference>
<dbReference type="GO" id="GO:0046983">
    <property type="term" value="F:protein dimerization activity"/>
    <property type="evidence" value="ECO:0007669"/>
    <property type="project" value="InterPro"/>
</dbReference>
<dbReference type="GO" id="GO:0030527">
    <property type="term" value="F:structural constituent of chromatin"/>
    <property type="evidence" value="ECO:0007669"/>
    <property type="project" value="InterPro"/>
</dbReference>
<dbReference type="GO" id="GO:0000976">
    <property type="term" value="F:transcription cis-regulatory region binding"/>
    <property type="evidence" value="ECO:0007669"/>
    <property type="project" value="TreeGrafter"/>
</dbReference>
<dbReference type="FunFam" id="1.10.287.1050:FF:000001">
    <property type="entry name" value="DNA-binding protein"/>
    <property type="match status" value="1"/>
</dbReference>
<dbReference type="FunFam" id="4.10.430.10:FF:000001">
    <property type="entry name" value="DNA-binding protein"/>
    <property type="match status" value="1"/>
</dbReference>
<dbReference type="Gene3D" id="1.10.287.1050">
    <property type="entry name" value="H-NS histone-like proteins"/>
    <property type="match status" value="1"/>
</dbReference>
<dbReference type="Gene3D" id="4.10.430.10">
    <property type="entry name" value="Histone-like protein H-NS, C-terminal domain"/>
    <property type="match status" value="1"/>
</dbReference>
<dbReference type="InterPro" id="IPR054180">
    <property type="entry name" value="H-NS-like_N"/>
</dbReference>
<dbReference type="InterPro" id="IPR027444">
    <property type="entry name" value="H-NS_C_dom"/>
</dbReference>
<dbReference type="InterPro" id="IPR037150">
    <property type="entry name" value="H-NS_C_dom_sf"/>
</dbReference>
<dbReference type="InterPro" id="IPR001801">
    <property type="entry name" value="Histone_HNS"/>
</dbReference>
<dbReference type="InterPro" id="IPR027454">
    <property type="entry name" value="Histone_HNS_N"/>
</dbReference>
<dbReference type="NCBIfam" id="NF008193">
    <property type="entry name" value="PRK10947.1"/>
    <property type="match status" value="1"/>
</dbReference>
<dbReference type="PANTHER" id="PTHR38097">
    <property type="match status" value="1"/>
</dbReference>
<dbReference type="PANTHER" id="PTHR38097:SF1">
    <property type="entry name" value="DNA-BINDING PROTEIN H-NS"/>
    <property type="match status" value="1"/>
</dbReference>
<dbReference type="Pfam" id="PF00816">
    <property type="entry name" value="Histone_HNS"/>
    <property type="match status" value="1"/>
</dbReference>
<dbReference type="Pfam" id="PF22470">
    <property type="entry name" value="Histone_HNS_N"/>
    <property type="match status" value="1"/>
</dbReference>
<dbReference type="PIRSF" id="PIRSF002096">
    <property type="entry name" value="HnS"/>
    <property type="match status" value="1"/>
</dbReference>
<dbReference type="SMART" id="SM00528">
    <property type="entry name" value="HNS"/>
    <property type="match status" value="1"/>
</dbReference>
<dbReference type="SUPFAM" id="SSF81273">
    <property type="entry name" value="H-NS histone-like proteins"/>
    <property type="match status" value="2"/>
</dbReference>
<accession>P0DOA5</accession>
<evidence type="ECO:0000250" key="1">
    <source>
        <dbReference type="UniProtKB" id="P0A1S2"/>
    </source>
</evidence>
<evidence type="ECO:0000250" key="2">
    <source>
        <dbReference type="UniProtKB" id="P0ACF8"/>
    </source>
</evidence>
<evidence type="ECO:0000255" key="3"/>
<evidence type="ECO:0000269" key="4">
    <source>
    </source>
</evidence>
<evidence type="ECO:0000303" key="5">
    <source>
    </source>
</evidence>
<evidence type="ECO:0000305" key="6"/>
<name>HNS_YEREN</name>
<keyword id="KW-0175">Coiled coil</keyword>
<keyword id="KW-0963">Cytoplasm</keyword>
<keyword id="KW-0903">Direct protein sequencing</keyword>
<keyword id="KW-0238">DNA-binding</keyword>
<keyword id="KW-0678">Repressor</keyword>
<keyword id="KW-0804">Transcription</keyword>
<keyword id="KW-0805">Transcription regulation</keyword>
<feature type="chain" id="PRO_0000436896" description="DNA-binding protein H-NS">
    <location>
        <begin position="1"/>
        <end position="136"/>
    </location>
</feature>
<feature type="DNA-binding region" evidence="1">
    <location>
        <begin position="113"/>
        <end position="118"/>
    </location>
</feature>
<feature type="coiled-coil region" evidence="3">
    <location>
        <begin position="13"/>
        <end position="67"/>
    </location>
</feature>
<protein>
    <recommendedName>
        <fullName>DNA-binding protein H-NS</fullName>
    </recommendedName>
</protein>
<sequence length="136" mass="15509">MSEALKILNNIRTLRAQARECTLETLEEMLEKLEVVVNERREEDSQAQAEIEERTRKLQQYREMLIADGIDPNELLNAMAVTKAAATKSKRAARPAKYKYIDENGETKTWTGQGRTPAVIKKAIEEQGKSLDDFLL</sequence>
<gene>
    <name evidence="5" type="primary">hns</name>
</gene>
<organism>
    <name type="scientific">Yersinia enterocolitica</name>
    <dbReference type="NCBI Taxonomy" id="630"/>
    <lineage>
        <taxon>Bacteria</taxon>
        <taxon>Pseudomonadati</taxon>
        <taxon>Pseudomonadota</taxon>
        <taxon>Gammaproteobacteria</taxon>
        <taxon>Enterobacterales</taxon>
        <taxon>Yersiniaceae</taxon>
        <taxon>Yersinia</taxon>
    </lineage>
</organism>
<comment type="function">
    <text evidence="2 4">A DNA-binding protein implicated in transcriptional repression and chromosome organization and compaction. Binds nucleation sites in AT-rich DNA and bridges them, forming higher-order nucleoprotein complexes and condensing the chromosome. As many horizontally transferred genes are AT-rich, it plays a central role in silencing foreign genes. A subset of genes are repressed by H-NS in association with YmoA (By similarity). Complements a number of hns deficiencies in E.coli; represses the bgl operon, represses hemolysin expression (PubMed:11790731).</text>
</comment>
<comment type="subunit">
    <text evidence="2 4">Interacts with YmoA in the absence of DNA (PubMed:11790731). Homodimer that oligomerizes on DNA into higher-order complexes that form bridges between disparate regions of DNA compacting it. Interacts with YmoA.</text>
</comment>
<comment type="subcellular location">
    <subcellularLocation>
        <location evidence="2">Cytoplasm</location>
        <location evidence="2">Nucleoid</location>
    </subcellularLocation>
</comment>
<comment type="similarity">
    <text evidence="6">Belongs to the histone-like protein H-NS family.</text>
</comment>
<reference key="1">
    <citation type="journal article" date="2002" name="J. Bacteriol.">
        <title>Evidence for direct protein-protein interaction between members of the enterobacterial Hha/YmoA and H-NS families of proteins.</title>
        <authorList>
            <person name="Nieto J.M."/>
            <person name="Madrid C."/>
            <person name="Miquelay E."/>
            <person name="Parra J.L."/>
            <person name="Rodriguez S."/>
            <person name="Juarez A."/>
        </authorList>
    </citation>
    <scope>NUCLEOTIDE SEQUENCE [GENOMIC DNA]</scope>
    <scope>PROTEIN SEQUENCE OF 2-27</scope>
    <scope>FUNCTION</scope>
    <scope>INTERACTION WITH YMOA</scope>
    <source>
        <strain>DSM 9499 / NCTC 11174 / Y754</strain>
    </source>
</reference>